<sequence length="234" mass="24895">MAKLTKRMRNIREKVEVTKEYDINEAVALLKELATAKFTESVDVAVNLGIDARKSDQNVRGATVLPHGTGREIRVAVFTQGANAEAAKEAGADLVGMEDLAELVKKGEMNFDVVVASPDAMRVVGQLGTILGPRGLMPNPKVGTVTPNVAEAVKNAKAGQVRYRNDKNGIIHTTIGKVDFDAAQLKENLEALLVALKKAKPTSAKGTFVKKVSISTTMGAGVSLDQATLNTQTN</sequence>
<accession>Q5E234</accession>
<accession>Q5E233</accession>
<keyword id="KW-1185">Reference proteome</keyword>
<keyword id="KW-0678">Repressor</keyword>
<keyword id="KW-0687">Ribonucleoprotein</keyword>
<keyword id="KW-0689">Ribosomal protein</keyword>
<keyword id="KW-0694">RNA-binding</keyword>
<keyword id="KW-0699">rRNA-binding</keyword>
<keyword id="KW-0810">Translation regulation</keyword>
<keyword id="KW-0820">tRNA-binding</keyword>
<feature type="chain" id="PRO_0000307661" description="Large ribosomal subunit protein uL1">
    <location>
        <begin position="1"/>
        <end position="234"/>
    </location>
</feature>
<gene>
    <name evidence="1" type="primary">rplA</name>
    <name type="ordered locus">VF_2418</name>
</gene>
<proteinExistence type="inferred from homology"/>
<evidence type="ECO:0000255" key="1">
    <source>
        <dbReference type="HAMAP-Rule" id="MF_01318"/>
    </source>
</evidence>
<evidence type="ECO:0000305" key="2"/>
<protein>
    <recommendedName>
        <fullName evidence="1">Large ribosomal subunit protein uL1</fullName>
    </recommendedName>
    <alternativeName>
        <fullName evidence="2">50S ribosomal protein L1</fullName>
    </alternativeName>
</protein>
<name>RL1_ALIF1</name>
<comment type="function">
    <text evidence="1">Binds directly to 23S rRNA. The L1 stalk is quite mobile in the ribosome, and is involved in E site tRNA release.</text>
</comment>
<comment type="function">
    <text evidence="1">Protein L1 is also a translational repressor protein, it controls the translation of the L11 operon by binding to its mRNA.</text>
</comment>
<comment type="subunit">
    <text evidence="1">Part of the 50S ribosomal subunit.</text>
</comment>
<comment type="similarity">
    <text evidence="1">Belongs to the universal ribosomal protein uL1 family.</text>
</comment>
<dbReference type="EMBL" id="CP000020">
    <property type="protein sequence ID" value="AAW86913.2"/>
    <property type="molecule type" value="Genomic_DNA"/>
</dbReference>
<dbReference type="RefSeq" id="WP_011262793.1">
    <property type="nucleotide sequence ID" value="NC_006840.2"/>
</dbReference>
<dbReference type="RefSeq" id="YP_205801.2">
    <property type="nucleotide sequence ID" value="NC_006840.2"/>
</dbReference>
<dbReference type="SMR" id="Q5E234"/>
<dbReference type="STRING" id="312309.VF_2418"/>
<dbReference type="EnsemblBacteria" id="AAW86913">
    <property type="protein sequence ID" value="AAW86913"/>
    <property type="gene ID" value="VF_2418"/>
</dbReference>
<dbReference type="GeneID" id="54165132"/>
<dbReference type="KEGG" id="vfi:VF_2418"/>
<dbReference type="PATRIC" id="fig|312309.11.peg.2450"/>
<dbReference type="eggNOG" id="COG0081">
    <property type="taxonomic scope" value="Bacteria"/>
</dbReference>
<dbReference type="HOGENOM" id="CLU_062853_0_0_6"/>
<dbReference type="OrthoDB" id="9803740at2"/>
<dbReference type="Proteomes" id="UP000000537">
    <property type="component" value="Chromosome I"/>
</dbReference>
<dbReference type="GO" id="GO:0022625">
    <property type="term" value="C:cytosolic large ribosomal subunit"/>
    <property type="evidence" value="ECO:0007669"/>
    <property type="project" value="TreeGrafter"/>
</dbReference>
<dbReference type="GO" id="GO:0019843">
    <property type="term" value="F:rRNA binding"/>
    <property type="evidence" value="ECO:0007669"/>
    <property type="project" value="UniProtKB-UniRule"/>
</dbReference>
<dbReference type="GO" id="GO:0003735">
    <property type="term" value="F:structural constituent of ribosome"/>
    <property type="evidence" value="ECO:0007669"/>
    <property type="project" value="InterPro"/>
</dbReference>
<dbReference type="GO" id="GO:0000049">
    <property type="term" value="F:tRNA binding"/>
    <property type="evidence" value="ECO:0007669"/>
    <property type="project" value="UniProtKB-KW"/>
</dbReference>
<dbReference type="GO" id="GO:0006417">
    <property type="term" value="P:regulation of translation"/>
    <property type="evidence" value="ECO:0007669"/>
    <property type="project" value="UniProtKB-KW"/>
</dbReference>
<dbReference type="GO" id="GO:0006412">
    <property type="term" value="P:translation"/>
    <property type="evidence" value="ECO:0007669"/>
    <property type="project" value="UniProtKB-UniRule"/>
</dbReference>
<dbReference type="CDD" id="cd00403">
    <property type="entry name" value="Ribosomal_L1"/>
    <property type="match status" value="1"/>
</dbReference>
<dbReference type="FunFam" id="3.40.50.790:FF:000001">
    <property type="entry name" value="50S ribosomal protein L1"/>
    <property type="match status" value="1"/>
</dbReference>
<dbReference type="Gene3D" id="3.30.190.20">
    <property type="match status" value="1"/>
</dbReference>
<dbReference type="Gene3D" id="3.40.50.790">
    <property type="match status" value="1"/>
</dbReference>
<dbReference type="HAMAP" id="MF_01318_B">
    <property type="entry name" value="Ribosomal_uL1_B"/>
    <property type="match status" value="1"/>
</dbReference>
<dbReference type="InterPro" id="IPR005878">
    <property type="entry name" value="Ribosom_uL1_bac-type"/>
</dbReference>
<dbReference type="InterPro" id="IPR002143">
    <property type="entry name" value="Ribosomal_uL1"/>
</dbReference>
<dbReference type="InterPro" id="IPR023674">
    <property type="entry name" value="Ribosomal_uL1-like"/>
</dbReference>
<dbReference type="InterPro" id="IPR028364">
    <property type="entry name" value="Ribosomal_uL1/biogenesis"/>
</dbReference>
<dbReference type="InterPro" id="IPR016095">
    <property type="entry name" value="Ribosomal_uL1_3-a/b-sand"/>
</dbReference>
<dbReference type="InterPro" id="IPR023673">
    <property type="entry name" value="Ribosomal_uL1_CS"/>
</dbReference>
<dbReference type="NCBIfam" id="TIGR01169">
    <property type="entry name" value="rplA_bact"/>
    <property type="match status" value="1"/>
</dbReference>
<dbReference type="PANTHER" id="PTHR36427">
    <property type="entry name" value="54S RIBOSOMAL PROTEIN L1, MITOCHONDRIAL"/>
    <property type="match status" value="1"/>
</dbReference>
<dbReference type="PANTHER" id="PTHR36427:SF3">
    <property type="entry name" value="LARGE RIBOSOMAL SUBUNIT PROTEIN UL1M"/>
    <property type="match status" value="1"/>
</dbReference>
<dbReference type="Pfam" id="PF00687">
    <property type="entry name" value="Ribosomal_L1"/>
    <property type="match status" value="1"/>
</dbReference>
<dbReference type="PIRSF" id="PIRSF002155">
    <property type="entry name" value="Ribosomal_L1"/>
    <property type="match status" value="1"/>
</dbReference>
<dbReference type="SUPFAM" id="SSF56808">
    <property type="entry name" value="Ribosomal protein L1"/>
    <property type="match status" value="1"/>
</dbReference>
<dbReference type="PROSITE" id="PS01199">
    <property type="entry name" value="RIBOSOMAL_L1"/>
    <property type="match status" value="1"/>
</dbReference>
<organism>
    <name type="scientific">Aliivibrio fischeri (strain ATCC 700601 / ES114)</name>
    <name type="common">Vibrio fischeri</name>
    <dbReference type="NCBI Taxonomy" id="312309"/>
    <lineage>
        <taxon>Bacteria</taxon>
        <taxon>Pseudomonadati</taxon>
        <taxon>Pseudomonadota</taxon>
        <taxon>Gammaproteobacteria</taxon>
        <taxon>Vibrionales</taxon>
        <taxon>Vibrionaceae</taxon>
        <taxon>Aliivibrio</taxon>
    </lineage>
</organism>
<reference key="1">
    <citation type="journal article" date="2005" name="Proc. Natl. Acad. Sci. U.S.A.">
        <title>Complete genome sequence of Vibrio fischeri: a symbiotic bacterium with pathogenic congeners.</title>
        <authorList>
            <person name="Ruby E.G."/>
            <person name="Urbanowski M."/>
            <person name="Campbell J."/>
            <person name="Dunn A."/>
            <person name="Faini M."/>
            <person name="Gunsalus R."/>
            <person name="Lostroh P."/>
            <person name="Lupp C."/>
            <person name="McCann J."/>
            <person name="Millikan D."/>
            <person name="Schaefer A."/>
            <person name="Stabb E."/>
            <person name="Stevens A."/>
            <person name="Visick K."/>
            <person name="Whistler C."/>
            <person name="Greenberg E.P."/>
        </authorList>
    </citation>
    <scope>NUCLEOTIDE SEQUENCE [LARGE SCALE GENOMIC DNA]</scope>
    <source>
        <strain>ATCC 700601 / ES114</strain>
    </source>
</reference>
<reference key="2">
    <citation type="journal article" date="2008" name="BMC Genomics">
        <title>Comparative genomics-based investigation of resequencing targets in Vibrio fischeri: focus on point miscalls and artefactual expansions.</title>
        <authorList>
            <person name="Mandel M.J."/>
            <person name="Stabb E.V."/>
            <person name="Ruby E.G."/>
        </authorList>
    </citation>
    <scope>SEQUENCE REVISION</scope>
</reference>